<sequence length="67" mass="7879">MSLFPVIVVFGLSFPPIFFELLLSLAIFWLVRRMLVPTGIYDFVWHPALFNTALYCCLFYLISRLFV</sequence>
<keyword id="KW-1003">Cell membrane</keyword>
<keyword id="KW-0472">Membrane</keyword>
<keyword id="KW-0812">Transmembrane</keyword>
<keyword id="KW-1133">Transmembrane helix</keyword>
<organism>
    <name type="scientific">Salmonella enteritidis PT4 (strain P125109)</name>
    <dbReference type="NCBI Taxonomy" id="550537"/>
    <lineage>
        <taxon>Bacteria</taxon>
        <taxon>Pseudomonadati</taxon>
        <taxon>Pseudomonadota</taxon>
        <taxon>Gammaproteobacteria</taxon>
        <taxon>Enterobacterales</taxon>
        <taxon>Enterobacteriaceae</taxon>
        <taxon>Salmonella</taxon>
    </lineage>
</organism>
<protein>
    <recommendedName>
        <fullName evidence="1">Protein AaeX</fullName>
    </recommendedName>
</protein>
<evidence type="ECO:0000255" key="1">
    <source>
        <dbReference type="HAMAP-Rule" id="MF_01546"/>
    </source>
</evidence>
<accession>B5R1A9</accession>
<reference key="1">
    <citation type="journal article" date="2008" name="Genome Res.">
        <title>Comparative genome analysis of Salmonella enteritidis PT4 and Salmonella gallinarum 287/91 provides insights into evolutionary and host adaptation pathways.</title>
        <authorList>
            <person name="Thomson N.R."/>
            <person name="Clayton D.J."/>
            <person name="Windhorst D."/>
            <person name="Vernikos G."/>
            <person name="Davidson S."/>
            <person name="Churcher C."/>
            <person name="Quail M.A."/>
            <person name="Stevens M."/>
            <person name="Jones M.A."/>
            <person name="Watson M."/>
            <person name="Barron A."/>
            <person name="Layton A."/>
            <person name="Pickard D."/>
            <person name="Kingsley R.A."/>
            <person name="Bignell A."/>
            <person name="Clark L."/>
            <person name="Harris B."/>
            <person name="Ormond D."/>
            <person name="Abdellah Z."/>
            <person name="Brooks K."/>
            <person name="Cherevach I."/>
            <person name="Chillingworth T."/>
            <person name="Woodward J."/>
            <person name="Norberczak H."/>
            <person name="Lord A."/>
            <person name="Arrowsmith C."/>
            <person name="Jagels K."/>
            <person name="Moule S."/>
            <person name="Mungall K."/>
            <person name="Saunders M."/>
            <person name="Whitehead S."/>
            <person name="Chabalgoity J.A."/>
            <person name="Maskell D."/>
            <person name="Humphreys T."/>
            <person name="Roberts M."/>
            <person name="Barrow P.A."/>
            <person name="Dougan G."/>
            <person name="Parkhill J."/>
        </authorList>
    </citation>
    <scope>NUCLEOTIDE SEQUENCE [LARGE SCALE GENOMIC DNA]</scope>
    <source>
        <strain>P125109</strain>
    </source>
</reference>
<name>AAEX_SALEP</name>
<proteinExistence type="inferred from homology"/>
<dbReference type="EMBL" id="AM933172">
    <property type="protein sequence ID" value="CAR34775.1"/>
    <property type="molecule type" value="Genomic_DNA"/>
</dbReference>
<dbReference type="RefSeq" id="WP_000051840.1">
    <property type="nucleotide sequence ID" value="NC_011294.1"/>
</dbReference>
<dbReference type="SMR" id="B5R1A9"/>
<dbReference type="GeneID" id="45138179"/>
<dbReference type="KEGG" id="set:SEN3199"/>
<dbReference type="HOGENOM" id="CLU_188292_0_0_6"/>
<dbReference type="Proteomes" id="UP000000613">
    <property type="component" value="Chromosome"/>
</dbReference>
<dbReference type="GO" id="GO:0005886">
    <property type="term" value="C:plasma membrane"/>
    <property type="evidence" value="ECO:0007669"/>
    <property type="project" value="UniProtKB-SubCell"/>
</dbReference>
<dbReference type="HAMAP" id="MF_01546">
    <property type="entry name" value="AaeX"/>
    <property type="match status" value="1"/>
</dbReference>
<dbReference type="InterPro" id="IPR012451">
    <property type="entry name" value="DUF1656"/>
</dbReference>
<dbReference type="NCBIfam" id="NF008615">
    <property type="entry name" value="PRK11594.1"/>
    <property type="match status" value="1"/>
</dbReference>
<dbReference type="Pfam" id="PF07869">
    <property type="entry name" value="DUF1656"/>
    <property type="match status" value="1"/>
</dbReference>
<gene>
    <name evidence="1" type="primary">aaeX</name>
    <name type="ordered locus">SEN3199</name>
</gene>
<comment type="subcellular location">
    <subcellularLocation>
        <location evidence="1">Cell membrane</location>
        <topology evidence="1">Multi-pass membrane protein</topology>
    </subcellularLocation>
</comment>
<comment type="similarity">
    <text evidence="1">Belongs to the AaeX family.</text>
</comment>
<feature type="chain" id="PRO_1000146761" description="Protein AaeX">
    <location>
        <begin position="1"/>
        <end position="67"/>
    </location>
</feature>
<feature type="transmembrane region" description="Helical" evidence="1">
    <location>
        <begin position="3"/>
        <end position="23"/>
    </location>
</feature>
<feature type="transmembrane region" description="Helical" evidence="1">
    <location>
        <begin position="43"/>
        <end position="63"/>
    </location>
</feature>